<evidence type="ECO:0000256" key="1">
    <source>
        <dbReference type="SAM" id="MobiDB-lite"/>
    </source>
</evidence>
<evidence type="ECO:0000269" key="2">
    <source>
    </source>
</evidence>
<evidence type="ECO:0000269" key="3">
    <source>
    </source>
</evidence>
<evidence type="ECO:0000269" key="4">
    <source>
    </source>
</evidence>
<evidence type="ECO:0000269" key="5">
    <source>
    </source>
</evidence>
<evidence type="ECO:0000269" key="6">
    <source ref="4"/>
</evidence>
<evidence type="ECO:0000303" key="7">
    <source>
    </source>
</evidence>
<evidence type="ECO:0000303" key="8">
    <source>
    </source>
</evidence>
<evidence type="ECO:0000305" key="9"/>
<evidence type="ECO:0000305" key="10">
    <source>
    </source>
</evidence>
<evidence type="ECO:0000305" key="11">
    <source>
    </source>
</evidence>
<dbReference type="EC" id="4.2.1.-" evidence="11"/>
<dbReference type="EMBL" id="AB872925">
    <property type="protein sequence ID" value="BAO10622.1"/>
    <property type="molecule type" value="Genomic_DNA"/>
</dbReference>
<dbReference type="SMR" id="V5XZU7"/>
<dbReference type="GO" id="GO:0004300">
    <property type="term" value="F:enoyl-CoA hydratase activity"/>
    <property type="evidence" value="ECO:0007669"/>
    <property type="project" value="RHEA"/>
</dbReference>
<dbReference type="CDD" id="cd06558">
    <property type="entry name" value="crotonase-like"/>
    <property type="match status" value="1"/>
</dbReference>
<dbReference type="Gene3D" id="3.90.226.10">
    <property type="entry name" value="2-enoyl-CoA Hydratase, Chain A, domain 1"/>
    <property type="match status" value="1"/>
</dbReference>
<dbReference type="InterPro" id="IPR029045">
    <property type="entry name" value="ClpP/crotonase-like_dom_sf"/>
</dbReference>
<dbReference type="InterPro" id="IPR001753">
    <property type="entry name" value="Enoyl-CoA_hydra/iso"/>
</dbReference>
<dbReference type="InterPro" id="IPR051683">
    <property type="entry name" value="Enoyl-CoA_Hydratase/Isomerase"/>
</dbReference>
<dbReference type="PANTHER" id="PTHR42964">
    <property type="entry name" value="ENOYL-COA HYDRATASE"/>
    <property type="match status" value="1"/>
</dbReference>
<dbReference type="PANTHER" id="PTHR42964:SF1">
    <property type="entry name" value="POLYKETIDE BIOSYNTHESIS ENOYL-COA HYDRATASE PKSH-RELATED"/>
    <property type="match status" value="1"/>
</dbReference>
<dbReference type="Pfam" id="PF00378">
    <property type="entry name" value="ECH_1"/>
    <property type="match status" value="1"/>
</dbReference>
<dbReference type="SUPFAM" id="SSF52096">
    <property type="entry name" value="ClpP/crotonase"/>
    <property type="match status" value="1"/>
</dbReference>
<gene>
    <name evidence="8" type="primary">AFT6-1</name>
</gene>
<accession>V5XZU7</accession>
<proteinExistence type="inferred from homology"/>
<organism>
    <name type="scientific">Alternaria alternata</name>
    <name type="common">Alternaria rot fungus</name>
    <name type="synonym">Torula alternata</name>
    <dbReference type="NCBI Taxonomy" id="5599"/>
    <lineage>
        <taxon>Eukaryota</taxon>
        <taxon>Fungi</taxon>
        <taxon>Dikarya</taxon>
        <taxon>Ascomycota</taxon>
        <taxon>Pezizomycotina</taxon>
        <taxon>Dothideomycetes</taxon>
        <taxon>Pleosporomycetidae</taxon>
        <taxon>Pleosporales</taxon>
        <taxon>Pleosporineae</taxon>
        <taxon>Pleosporaceae</taxon>
        <taxon>Alternaria</taxon>
        <taxon>Alternaria sect. Alternaria</taxon>
        <taxon>Alternaria alternata complex</taxon>
    </lineage>
</organism>
<reference key="1">
    <citation type="journal article" date="2014" name="New Phytol.">
        <title>Complex regulation of secondary metabolism controlling pathogenicity in the phytopathogenic fungus Alternaria alternata.</title>
        <authorList>
            <person name="Takaoka S."/>
            <person name="Kurata M."/>
            <person name="Harimoto Y."/>
            <person name="Hatta R."/>
            <person name="Yamamoto M."/>
            <person name="Akimitsu K."/>
            <person name="Tsuge T."/>
        </authorList>
    </citation>
    <scope>NUCLEOTIDE SEQUENCE [GENOMIC DNA]</scope>
    <scope>FUNCTION</scope>
    <source>
        <strain>NAF8</strain>
    </source>
</reference>
<reference key="2">
    <citation type="journal article" date="2002" name="Genetics">
        <title>A conditionally dispensable chromosome controls host-specific pathogenicity in the fungal plant pathogen Alternaria alternata.</title>
        <authorList>
            <person name="Hatta R."/>
            <person name="Ito K."/>
            <person name="Hosaki Y."/>
            <person name="Tanaka T."/>
            <person name="Tanaka A."/>
            <person name="Yamamoto M."/>
            <person name="Akimitsu K."/>
            <person name="Tsuge T."/>
        </authorList>
    </citation>
    <scope>FUNCTION</scope>
    <scope>PATHWAY</scope>
    <source>
        <strain>NAF8</strain>
    </source>
</reference>
<reference key="3">
    <citation type="journal article" date="2004" name="Mol. Microbiol.">
        <title>Dissection of the host range of the fungal plant pathogen Alternaria alternata by modification of secondary metabolism.</title>
        <authorList>
            <person name="Ito K."/>
            <person name="Tanaka T."/>
            <person name="Hatta R."/>
            <person name="Yamamoto M."/>
            <person name="Akimitsu K."/>
            <person name="Tsuge T."/>
        </authorList>
    </citation>
    <scope>FUNCTION</scope>
    <source>
        <strain>NAF8</strain>
    </source>
</reference>
<reference key="4">
    <citation type="journal article" date="2005" name="J. Gen. Plant Pathol.">
        <title>Structural analysis of cosmid clone pcAFT-2 carrying AFT10-1 encoding an acyl-CoA dehydrogenase involved in AF-toxin production in the strawberry pathotype of Alternaria alternata.</title>
        <authorList>
            <person name="Ruswandi S."/>
            <person name="Kitani K."/>
            <person name="Akimitsu K."/>
            <person name="Tsuge T."/>
            <person name="Shiraishi T."/>
            <person name="Yamamoto M."/>
        </authorList>
    </citation>
    <scope>FUNCTION</scope>
    <source>
        <strain>NAF8</strain>
    </source>
</reference>
<reference key="5">
    <citation type="journal article" date="2008" name="Mol. Plant Microbe Interact.">
        <title>Functional analysis of a multicopy host-selective ACT-toxin biosynthesis gene in the tangerine pathotype of Alternaria alternata using RNA silencing.</title>
        <authorList>
            <person name="Miyamoto Y."/>
            <person name="Masunaka A."/>
            <person name="Tsuge T."/>
            <person name="Yamamoto M."/>
            <person name="Ohtani K."/>
            <person name="Fukumoto T."/>
            <person name="Gomi K."/>
            <person name="Peever T.L."/>
            <person name="Akimitsu K."/>
        </authorList>
    </citation>
    <scope>FUNCTION</scope>
    <source>
        <strain>NAF8</strain>
    </source>
</reference>
<reference key="6">
    <citation type="journal article" date="2013" name="FEMS Microbiol. Rev.">
        <title>Host-selective toxins produced by the plant pathogenic fungus Alternaria alternata.</title>
        <authorList>
            <person name="Tsuge T."/>
            <person name="Harimoto Y."/>
            <person name="Akimitsu K."/>
            <person name="Ohtani K."/>
            <person name="Kodama M."/>
            <person name="Akagi Y."/>
            <person name="Egusa M."/>
            <person name="Yamamoto M."/>
            <person name="Otani H."/>
        </authorList>
    </citation>
    <scope>REVIEW ON HOST-SELECTIVE TOXINS</scope>
</reference>
<feature type="chain" id="PRO_0000444834" description="Enoyl-CoA hydratase AFT6-1">
    <location>
        <begin position="1"/>
        <end position="298"/>
    </location>
</feature>
<feature type="region of interest" description="Disordered" evidence="1">
    <location>
        <begin position="1"/>
        <end position="39"/>
    </location>
</feature>
<name>AFT61_ALTAL</name>
<comment type="function">
    <text evidence="2 3 4 5 6 7">Enoyl-CoA hydratase; part of the gene clusters that mediate the biosynthesis of the host-selective toxins (HSTs) AF-toxins responsible for Alternaria black spot of strawberry disease by the strawberry pathotype (PubMed:24611558). AF-toxin I and III are valine derivatives of 2,3-dyhydroxy-isovaleric acid and 2-hydroxy-isovaleric acid respectively, while AF II is an isoleucine derivative of 2-hydroxy-valeric acid (PubMed:15066029, PubMed:22846083, Ref.4). These derivatives are bound to a 9,10-epoxy-8-hydroxy-9-methyl-decatrienoic acid (EDA) moiety (PubMed:15066029, PubMed:22846083, Ref.4). On cellular level, AF-toxin affects plasma membrane of susceptible cells and cause a sudden increase in loss of K(+) after a few minutes of toxin treatment (PubMed:22846083). The aldo-keto reductase AFTS1 catalyzes the conversion of 2-keto-isovaleric acid (2-KIV) to 2-hydroxy-isovaleric acid (2-HIV) by reduction of its ketone to an alcohol (PubMed:15066029). The acyl-CoA ligase AFT1, the hydrolase AFT2 and the enoyl-CoA hydratases AFT3 and AFT6, but also the polyketide synthase AFT9, the acyl-CoA dehydrogenase AFT10, the cytochrome P450 monooxygenase AFT11 and the oxidoreductase AFT12 are all involved in the biosynthesis of the AK-, AF- and ACT-toxin common EDA structural moiety (PubMed:12019223, PubMed:18986255, Ref.4). The exact function of each enzyme, and of additional enzymes identified within the AF-toxin clusters have still to be determined (PubMed:12019223, PubMed:18986255, Ref.4).</text>
</comment>
<comment type="catalytic activity">
    <reaction evidence="10">
        <text>a (3S)-3-hydroxyacyl-CoA = a (2E)-enoyl-CoA + H2O</text>
        <dbReference type="Rhea" id="RHEA:16105"/>
        <dbReference type="ChEBI" id="CHEBI:15377"/>
        <dbReference type="ChEBI" id="CHEBI:57318"/>
        <dbReference type="ChEBI" id="CHEBI:58856"/>
    </reaction>
</comment>
<comment type="catalytic activity">
    <reaction evidence="10">
        <text>a 4-saturated-(3S)-3-hydroxyacyl-CoA = a (3E)-enoyl-CoA + H2O</text>
        <dbReference type="Rhea" id="RHEA:20724"/>
        <dbReference type="ChEBI" id="CHEBI:15377"/>
        <dbReference type="ChEBI" id="CHEBI:58521"/>
        <dbReference type="ChEBI" id="CHEBI:137480"/>
    </reaction>
</comment>
<comment type="pathway">
    <text evidence="11">Mycotoxin biosynthesis.</text>
</comment>
<comment type="miscellaneous">
    <text evidence="2">Gene clusters encoding host-selective toxins (HSTs) are localized on conditionally dispensable chromosomes (CDCs), also called supernumerary chromosomes, where they are present in multiple copies (PubMed:12019223). The CDCs are not essential for saprophytic growth but controls host-selective pathogenicity (PubMed:12019223).</text>
</comment>
<comment type="similarity">
    <text evidence="9">Belongs to the enoyl-CoA hydratase/isomerase family.</text>
</comment>
<sequence length="298" mass="32627">MTYSTTKSVAMNPDEDAPPSDINSSGRLMSHSEVEPRGNGYEVLQQAGTVRILLSRPERGNALSLSLARDLTRLFQTFSAQHSVHRIVLTGKGKYFCSGMDLGEELYEDATERCLALQDLFGAIDACPKTTVAVINGPAFGGGVGLAFVCDIRVAVSTSFFCLSEVKLGLCPATVSRFIIREWGVSLARMAMLTARKIHPQALQEMGVLHAVALDEEALKVVTENLLDDLGFAAPQASAWCKALTRKTRNGNGDHDQFARQIFETMVAPGSESEYGVAQFRRGRKNIRWEQAECLHTR</sequence>
<protein>
    <recommendedName>
        <fullName evidence="8">Enoyl-CoA hydratase AFT6-1</fullName>
        <ecNumber evidence="11">4.2.1.-</ecNumber>
    </recommendedName>
    <alternativeName>
        <fullName evidence="8">AF-toxin biosynthesis protein 6</fullName>
    </alternativeName>
</protein>
<keyword id="KW-0456">Lyase</keyword>
<keyword id="KW-0843">Virulence</keyword>